<evidence type="ECO:0000255" key="1"/>
<evidence type="ECO:0000255" key="2">
    <source>
        <dbReference type="PROSITE-ProRule" id="PRU00258"/>
    </source>
</evidence>
<evidence type="ECO:0000255" key="3">
    <source>
        <dbReference type="PROSITE-ProRule" id="PRU01348"/>
    </source>
</evidence>
<evidence type="ECO:0000255" key="4">
    <source>
        <dbReference type="PROSITE-ProRule" id="PRU01363"/>
    </source>
</evidence>
<evidence type="ECO:0000255" key="5">
    <source>
        <dbReference type="PROSITE-ProRule" id="PRU10022"/>
    </source>
</evidence>
<evidence type="ECO:0000269" key="6">
    <source>
    </source>
</evidence>
<evidence type="ECO:0000303" key="7">
    <source>
    </source>
</evidence>
<evidence type="ECO:0000305" key="8">
    <source>
    </source>
</evidence>
<comment type="function">
    <text evidence="6 8">Highly reducing polyketide synthase; part of the gene cluster that mediates the biosynthesis of phomenoic acid, a long chain aliphatic carboxylic acid that does not appear to be essential for pathogenicity but may play a role in allowing to outcompete other fungi in the environmental niche via its antifungal properties (PubMed:23396262). The polyketide synthase produces the long methylated aliphatic carboxylic acid chain of phomenoic acid (Probable). The cluster-specific cytochrome P450 monooxygenase may then hydroxylate the methyl group of carbon 31 (Probable). The putative dehydrogenase YogA, which has no obvious role in phomenoic acid biosynthesis, may further modify phomenoic acid to produce a compound not identified yet (Probable).</text>
</comment>
<comment type="pathway">
    <text evidence="6">Secondary metabolite biosynthesis.</text>
</comment>
<comment type="induction">
    <text evidence="6">Expression is positively regulated by the phomenoic acid biosynthesis cluster-specific transcription regulator C6TF.</text>
</comment>
<comment type="domain">
    <text evidence="8">Multidomain protein; including a ketosynthase (KS) that catalyzes repeated decarboxylative condensation to elongate the polyketide backbone; a malonyl-CoA:ACP transacylase (MAT) that selects and transfers the extender unit malonyl-CoA; a dehydratase (DH) domain that reduces hydroxyl groups to enoyl groups; a methyltransferase (CMeT) domain responsible for the incorporation of methyl groups; an enoylreductase (ER) domain that reduces enoyl groups to alkyl group; a ketoreductase (KR) domain that catalyzes beta-ketoreduction steps; and an acyl-carrier protein (ACP) that serves as the tether of the growing and completed polyketide via its phosphopantetheinyl arm.</text>
</comment>
<comment type="disruption phenotype">
    <text evidence="6">Abolishes the production of phomenoic acid.</text>
</comment>
<gene>
    <name evidence="7" type="primary">PKS2</name>
    <name type="ORF">LEMA_P002660</name>
</gene>
<feature type="chain" id="PRO_0000446532" description="Highly reducing polyketide synthase PKS2">
    <location>
        <begin position="1"/>
        <end position="2543"/>
    </location>
</feature>
<feature type="domain" description="Ketosynthase family 3 (KS3)" evidence="3 8">
    <location>
        <begin position="4"/>
        <end position="425"/>
    </location>
</feature>
<feature type="domain" description="PKS/mFAS DH" evidence="4">
    <location>
        <begin position="969"/>
        <end position="1281"/>
    </location>
</feature>
<feature type="domain" description="Carrier" evidence="2">
    <location>
        <begin position="2463"/>
        <end position="2540"/>
    </location>
</feature>
<feature type="region of interest" description="Malonyl-CoA:ACP transacylase (MAT) domain" evidence="1 8">
    <location>
        <begin position="573"/>
        <end position="902"/>
    </location>
</feature>
<feature type="region of interest" description="Dehydratase (DH) domain" evidence="1 8">
    <location>
        <begin position="969"/>
        <end position="1283"/>
    </location>
</feature>
<feature type="region of interest" description="N-terminal hotdog fold" evidence="4">
    <location>
        <begin position="969"/>
        <end position="1101"/>
    </location>
</feature>
<feature type="region of interest" description="C-terminal hotdog fold" evidence="4">
    <location>
        <begin position="1119"/>
        <end position="1281"/>
    </location>
</feature>
<feature type="region of interest" description="Methyltransferase (CMet) domain" evidence="1 8">
    <location>
        <begin position="1438"/>
        <end position="1631"/>
    </location>
</feature>
<feature type="region of interest" description="Enoylreductase (ER) domain" evidence="1 8">
    <location>
        <begin position="1847"/>
        <end position="2159"/>
    </location>
</feature>
<feature type="region of interest" description="Ketoreductase (KR) domain" evidence="1 8">
    <location>
        <begin position="2184"/>
        <end position="2359"/>
    </location>
</feature>
<feature type="active site" description="For beta-ketoacyl synthase activity" evidence="3">
    <location>
        <position position="174"/>
    </location>
</feature>
<feature type="active site" description="For beta-ketoacyl synthase activity" evidence="3">
    <location>
        <position position="309"/>
    </location>
</feature>
<feature type="active site" description="For beta-ketoacyl synthase activity" evidence="3">
    <location>
        <position position="349"/>
    </location>
</feature>
<feature type="active site" description="For malonyltransferase activity" evidence="5">
    <location>
        <position position="662"/>
    </location>
</feature>
<feature type="active site" description="Proton acceptor; for dehydratase activity" evidence="4">
    <location>
        <position position="1001"/>
    </location>
</feature>
<feature type="active site" description="Proton donor; for dehydratase activity" evidence="4">
    <location>
        <position position="1188"/>
    </location>
</feature>
<feature type="modified residue" description="O-(pantetheine 4'-phosphoryl)serine" evidence="2">
    <location>
        <position position="2500"/>
    </location>
</feature>
<sequence length="2543" mass="278542">MAQEPRIAVIGLSYRAPGVKGKSLWEYLSQARSAWTSVPADRYDQSAYYQAGGQKSGVVGTKGAHFIDSPFGFDAAFFNMRADEAKHADPQHRLMLEVALEAAEDAGKTFPDLAGKKIGVFVGSGQHEYAQRLGDDEHAIQTFSGTGAAPCMAANRVSYFFDIDGPSVVADAACASSVYAADMAVRALRNGECDGAFVGSASLNLSPAGWLVLEKTGALSEHGRSYSYDTKASGFGRGEGAACLLLKRYDDAIRDGDPVQALILSSACNHSGRSDGITMPNGLAQQKLLWSVHNAAGVDPSDTPVVEGHGTGTAVGDPIEAGAFTAVLARNRTANNPIYLGSLKSNFGHLEGASGVLAMVKAIMMVNKGIVLPTAGFEKINPKIEGHEKIKIAEMPLPWPKNEPRRCIVTNFGFGGSNSAILLEGPPPKAVSDDHALNGAAGTNGHALNGTNGTNGHALNGANGTNGHAINGANGTNGHHENGNGVATQNQRLYVFSAKTQKSLTSYLSTFDEYLDEAPESSEFAKDLSYTLGQRRNHYPYRVAAVADSIETLQEKLSALKPSRTKERGVLFVFTGQGAQHAEMASGLESFEIFNKTLQEAEMQLQTMGAPWSLIEELRKPSSESRVDDAEISQPACTAVQLALVALLKEWGVTPAAVTGHSSGEIAAAYAAGLITFQQAIAASYFRGQAAAQLAAKQQPEEKGAMLALGVSFEEASKLIEEHAEAYATVAAVNSPNSVTISGDQSAIDNVHKAAEAKGLFARKLKVQMAYHSRHMEAVAASYLEDIKPYFQEDAPFLDKKSTTNPAFVSSVTGRVVDRIEASYWVKNLVQPVMFMDAVHGLLAPQHLGTGKAAQALPRVVIEVGPHAALKNPIKQTAELVQVQQNWTPASFTYLPTLFRGTDATQAVLELASSLFTLGARVELAAVNQTDKHNAEVLTELPAYAWDKTDYELRPRSTNDKYFPGENYHPLLGRKISPNASGERTYRQVFTLDEMPWIRDHVVGGATIFPMTGYMSCAIEAARRTLSTPAAAFLVTDFHVVRSLEIHEEETVDMTTKLRPAAIGEGAFSTKVWSFEMTTWAEESGWTKHSWGQIEAEMTDMSMDTPTFRASLPLVNKTTGLKEHDINAEYQTAGLRATLYGPSFRNNVKFYEGKGYTILEHRLRDLGEALRDPYARGSPVSTDPPTLDGFLQGGGPLQYDEHGRRPAQMPNYISRFRVSNKIPSDPSHRFDVVMRRLDYDVRGGRMHVGVAAFSRGPNDELTPIAEWESCAFRNIGSAEEVIDPSATVPDNWSWEVLPRYDFVPQDQLRKKLCDAVGELGVEEDIRIRKGEEAACYYIEKALKETADLDYSKLPPHLARFVRWGYKTVAEYDLDYSRGEPTALLNEVRTSDAQGELICIMGEHIVDILRGKIEPLEIMLTDGRLTRHYEADVTNAHLSKVLGYLTEYLADLEPNQRILEIGGGTAGTTLPVLEGLSRGRDELAVLDYTFTDISTGFFEMARKKLSDWSRRITYKRLDITQDPSDQGFEQQDYDVVIAANVLHATADMVKTMTHVRSLLKPGGKLILLEAMRHPASVLPFSLLPGWWEAEDKYRDHEEGPMMPATVWNQLLLDSGFSGVDVVLPSRYGTDKPFVSILCSTRIGKQDNSRPITICGPFLDENEVEFAQSVADLISKELGYPTEMKPYAEIDPEDDPYYVFIDSPHESALQDMDQEKFKSLQTLLLHNTGLLWVTPEGASPDAKIIQGMVRTLRMEVDLKNLILFEDVPCTSQGAAGIMKLATKLRDSELSRDQDFDFAWQDGAIHLPRMRQLKEVKEQFAVEEGVAYRKMQNLWDNNDRGLEMTIDAAGSPDTIYFQRTDVSNIGEDEVVVRVEAAGVGHRDLEVILGSIPWAPPSYEGAGKIIRTGSRISHLREGDDVFFLTPDSSALATEVKLPSWLVGKIPQGITIHDAATLPLAYSLAVLALIQTARLRKNETVLIHAAAGAVGQACVALAQNVGAHVYVTAGNEAKREFLHEKFGIPKDRIFSSRTPEFRDQILSATANKGIDVIVNSLGGELMTETWALTAPFGRFIEIGKKDAFQNNNLPMKPFNRNVTYTGIDLRDLYQFRRDDIKDVFTEVVTLLQRGNIQPIGPVTTTPISQFASALRKLKSGEHMGKMVITLGKDDTVVAETALRPLNVTLKPDATYLVAGGTRGIGLDLAYWMIDHGARYIVLLGRSGASGPEAQKILNRYKDTDVCVKIFSCNVGHRDELAEVVEAIKDLPPVRGVVHSALLLSDKLFVNSTLEDWEIITTPRVKGAWNLHELMPDNLDFFVALSSFNGDTGNLGQAIYAGTAGFYNAFSQYRNSRGQYTVSIALPVVLDVGYVADNNLSEILKESLGVAITMADIRAIFGGILLGPSSPFVYNGRAQTFMVYIDGQPVQNGGWKYFHPVHTKVRLMSDRRRVKIASGGVDQHSASWTTAEDPLIGLTEAMITKVSAMTMIEREEVLPDAPLTSYNLDSLVSVELRNWIRRETAVELTLSAIMQADSLRALATEILSQRKAE</sequence>
<reference key="1">
    <citation type="journal article" date="2011" name="Nat. Commun.">
        <title>Effector diversification within compartments of the Leptosphaeria maculans genome affected by Repeat-Induced Point mutations.</title>
        <authorList>
            <person name="Rouxel T."/>
            <person name="Grandaubert J."/>
            <person name="Hane J.K."/>
            <person name="Hoede C."/>
            <person name="van de Wouw A.P."/>
            <person name="Couloux A."/>
            <person name="Dominguez V."/>
            <person name="Anthouard V."/>
            <person name="Bally P."/>
            <person name="Bourras S."/>
            <person name="Cozijnsen A.J."/>
            <person name="Ciuffetti L.M."/>
            <person name="Degrave A."/>
            <person name="Dilmaghani A."/>
            <person name="Duret L."/>
            <person name="Fudal I."/>
            <person name="Goodwin S.B."/>
            <person name="Gout L."/>
            <person name="Glaser N."/>
            <person name="Linglin J."/>
            <person name="Kema G.H.J."/>
            <person name="Lapalu N."/>
            <person name="Lawrence C.B."/>
            <person name="May K."/>
            <person name="Meyer M."/>
            <person name="Ollivier B."/>
            <person name="Poulain J."/>
            <person name="Schoch C.L."/>
            <person name="Simon A."/>
            <person name="Spatafora J.W."/>
            <person name="Stachowiak A."/>
            <person name="Turgeon B.G."/>
            <person name="Tyler B.M."/>
            <person name="Vincent D."/>
            <person name="Weissenbach J."/>
            <person name="Amselem J."/>
            <person name="Quesneville H."/>
            <person name="Oliver R.P."/>
            <person name="Wincker P."/>
            <person name="Balesdent M.-H."/>
            <person name="Howlett B.J."/>
        </authorList>
    </citation>
    <scope>NUCLEOTIDE SEQUENCE [LARGE SCALE GENOMIC DNA]</scope>
    <source>
        <strain>JN3 / isolate v23.1.3 / race Av1-4-5-6-7-8</strain>
    </source>
</reference>
<reference key="2">
    <citation type="journal article" date="2013" name="Fungal Genet. Biol.">
        <title>A gene cluster responsible for biosynthesis of phomenoic acid in the plant pathogenic fungus, Leptosphaeria maculans.</title>
        <authorList>
            <person name="Elliott C.E."/>
            <person name="Callahan D.L."/>
            <person name="Schwenk D."/>
            <person name="Nett M."/>
            <person name="Hoffmeister D."/>
            <person name="Howlett B.J."/>
        </authorList>
    </citation>
    <scope>IDENTIFICATION</scope>
    <scope>DOMAIN</scope>
    <scope>DISRUPTION PHENOTYPE</scope>
    <scope>FUNCTION</scope>
    <scope>INDUCTION</scope>
    <scope>PATHWAY</scope>
</reference>
<dbReference type="EC" id="2.3.1.-" evidence="8"/>
<dbReference type="EMBL" id="FP929139">
    <property type="protein sequence ID" value="CBY01479.1"/>
    <property type="molecule type" value="Genomic_DNA"/>
</dbReference>
<dbReference type="RefSeq" id="XP_003844958.1">
    <property type="nucleotide sequence ID" value="XM_003844910.1"/>
</dbReference>
<dbReference type="SMR" id="E5AE40"/>
<dbReference type="STRING" id="985895.E5AE40"/>
<dbReference type="EnsemblFungi" id="CBY01479">
    <property type="protein sequence ID" value="CBY01479"/>
    <property type="gene ID" value="LEMA_P002660.1"/>
</dbReference>
<dbReference type="GeneID" id="13290520"/>
<dbReference type="VEuPathDB" id="FungiDB:LEMA_P002660.1"/>
<dbReference type="eggNOG" id="KOG1202">
    <property type="taxonomic scope" value="Eukaryota"/>
</dbReference>
<dbReference type="HOGENOM" id="CLU_000022_31_1_1"/>
<dbReference type="InParanoid" id="E5AE40"/>
<dbReference type="OMA" id="RHYEADV"/>
<dbReference type="OrthoDB" id="329835at2759"/>
<dbReference type="Proteomes" id="UP000002668">
    <property type="component" value="Genome"/>
</dbReference>
<dbReference type="GO" id="GO:0004312">
    <property type="term" value="F:fatty acid synthase activity"/>
    <property type="evidence" value="ECO:0007669"/>
    <property type="project" value="TreeGrafter"/>
</dbReference>
<dbReference type="GO" id="GO:0008168">
    <property type="term" value="F:methyltransferase activity"/>
    <property type="evidence" value="ECO:0007669"/>
    <property type="project" value="UniProtKB-KW"/>
</dbReference>
<dbReference type="GO" id="GO:0016491">
    <property type="term" value="F:oxidoreductase activity"/>
    <property type="evidence" value="ECO:0007669"/>
    <property type="project" value="UniProtKB-KW"/>
</dbReference>
<dbReference type="GO" id="GO:0031177">
    <property type="term" value="F:phosphopantetheine binding"/>
    <property type="evidence" value="ECO:0007669"/>
    <property type="project" value="InterPro"/>
</dbReference>
<dbReference type="GO" id="GO:0006633">
    <property type="term" value="P:fatty acid biosynthetic process"/>
    <property type="evidence" value="ECO:0007669"/>
    <property type="project" value="TreeGrafter"/>
</dbReference>
<dbReference type="GO" id="GO:0032259">
    <property type="term" value="P:methylation"/>
    <property type="evidence" value="ECO:0007669"/>
    <property type="project" value="UniProtKB-KW"/>
</dbReference>
<dbReference type="GO" id="GO:0044550">
    <property type="term" value="P:secondary metabolite biosynthetic process"/>
    <property type="evidence" value="ECO:0007669"/>
    <property type="project" value="UniProtKB-ARBA"/>
</dbReference>
<dbReference type="CDD" id="cd02440">
    <property type="entry name" value="AdoMet_MTases"/>
    <property type="match status" value="1"/>
</dbReference>
<dbReference type="CDD" id="cd05195">
    <property type="entry name" value="enoyl_red"/>
    <property type="match status" value="1"/>
</dbReference>
<dbReference type="CDD" id="cd00833">
    <property type="entry name" value="PKS"/>
    <property type="match status" value="1"/>
</dbReference>
<dbReference type="FunFam" id="3.40.50.720:FF:000209">
    <property type="entry name" value="Polyketide synthase Pks12"/>
    <property type="match status" value="1"/>
</dbReference>
<dbReference type="Gene3D" id="3.30.70.3290">
    <property type="match status" value="1"/>
</dbReference>
<dbReference type="Gene3D" id="3.40.47.10">
    <property type="match status" value="1"/>
</dbReference>
<dbReference type="Gene3D" id="1.10.1200.10">
    <property type="entry name" value="ACP-like"/>
    <property type="match status" value="1"/>
</dbReference>
<dbReference type="Gene3D" id="3.40.366.10">
    <property type="entry name" value="Malonyl-Coenzyme A Acyl Carrier Protein, domain 2"/>
    <property type="match status" value="1"/>
</dbReference>
<dbReference type="Gene3D" id="3.90.180.10">
    <property type="entry name" value="Medium-chain alcohol dehydrogenases, catalytic domain"/>
    <property type="match status" value="1"/>
</dbReference>
<dbReference type="Gene3D" id="3.40.50.720">
    <property type="entry name" value="NAD(P)-binding Rossmann-like Domain"/>
    <property type="match status" value="1"/>
</dbReference>
<dbReference type="Gene3D" id="3.10.129.110">
    <property type="entry name" value="Polyketide synthase dehydratase"/>
    <property type="match status" value="1"/>
</dbReference>
<dbReference type="Gene3D" id="3.40.50.150">
    <property type="entry name" value="Vaccinia Virus protein VP39"/>
    <property type="match status" value="1"/>
</dbReference>
<dbReference type="InterPro" id="IPR001227">
    <property type="entry name" value="Ac_transferase_dom_sf"/>
</dbReference>
<dbReference type="InterPro" id="IPR036736">
    <property type="entry name" value="ACP-like_sf"/>
</dbReference>
<dbReference type="InterPro" id="IPR014043">
    <property type="entry name" value="Acyl_transferase_dom"/>
</dbReference>
<dbReference type="InterPro" id="IPR016035">
    <property type="entry name" value="Acyl_Trfase/lysoPLipase"/>
</dbReference>
<dbReference type="InterPro" id="IPR013154">
    <property type="entry name" value="ADH-like_N"/>
</dbReference>
<dbReference type="InterPro" id="IPR011032">
    <property type="entry name" value="GroES-like_sf"/>
</dbReference>
<dbReference type="InterPro" id="IPR014031">
    <property type="entry name" value="Ketoacyl_synth_C"/>
</dbReference>
<dbReference type="InterPro" id="IPR014030">
    <property type="entry name" value="Ketoacyl_synth_N"/>
</dbReference>
<dbReference type="InterPro" id="IPR016036">
    <property type="entry name" value="Malonyl_transacylase_ACP-bd"/>
</dbReference>
<dbReference type="InterPro" id="IPR013217">
    <property type="entry name" value="Methyltransf_12"/>
</dbReference>
<dbReference type="InterPro" id="IPR036291">
    <property type="entry name" value="NAD(P)-bd_dom_sf"/>
</dbReference>
<dbReference type="InterPro" id="IPR020841">
    <property type="entry name" value="PKS_Beta-ketoAc_synthase_dom"/>
</dbReference>
<dbReference type="InterPro" id="IPR042104">
    <property type="entry name" value="PKS_dehydratase_sf"/>
</dbReference>
<dbReference type="InterPro" id="IPR020807">
    <property type="entry name" value="PKS_DH"/>
</dbReference>
<dbReference type="InterPro" id="IPR049552">
    <property type="entry name" value="PKS_DH_N"/>
</dbReference>
<dbReference type="InterPro" id="IPR020843">
    <property type="entry name" value="PKS_ER"/>
</dbReference>
<dbReference type="InterPro" id="IPR013968">
    <property type="entry name" value="PKS_KR"/>
</dbReference>
<dbReference type="InterPro" id="IPR049900">
    <property type="entry name" value="PKS_mFAS_DH"/>
</dbReference>
<dbReference type="InterPro" id="IPR050091">
    <property type="entry name" value="PKS_NRPS_Biosynth_Enz"/>
</dbReference>
<dbReference type="InterPro" id="IPR020806">
    <property type="entry name" value="PKS_PP-bd"/>
</dbReference>
<dbReference type="InterPro" id="IPR009081">
    <property type="entry name" value="PP-bd_ACP"/>
</dbReference>
<dbReference type="InterPro" id="IPR006162">
    <property type="entry name" value="Ppantetheine_attach_site"/>
</dbReference>
<dbReference type="InterPro" id="IPR029063">
    <property type="entry name" value="SAM-dependent_MTases_sf"/>
</dbReference>
<dbReference type="InterPro" id="IPR016039">
    <property type="entry name" value="Thiolase-like"/>
</dbReference>
<dbReference type="PANTHER" id="PTHR43775:SF29">
    <property type="entry name" value="ASPERFURANONE POLYKETIDE SYNTHASE AFOG-RELATED"/>
    <property type="match status" value="1"/>
</dbReference>
<dbReference type="PANTHER" id="PTHR43775">
    <property type="entry name" value="FATTY ACID SYNTHASE"/>
    <property type="match status" value="1"/>
</dbReference>
<dbReference type="Pfam" id="PF00698">
    <property type="entry name" value="Acyl_transf_1"/>
    <property type="match status" value="1"/>
</dbReference>
<dbReference type="Pfam" id="PF08240">
    <property type="entry name" value="ADH_N"/>
    <property type="match status" value="1"/>
</dbReference>
<dbReference type="Pfam" id="PF13602">
    <property type="entry name" value="ADH_zinc_N_2"/>
    <property type="match status" value="1"/>
</dbReference>
<dbReference type="Pfam" id="PF22621">
    <property type="entry name" value="CurL-like_PKS_C"/>
    <property type="match status" value="1"/>
</dbReference>
<dbReference type="Pfam" id="PF00109">
    <property type="entry name" value="ketoacyl-synt"/>
    <property type="match status" value="1"/>
</dbReference>
<dbReference type="Pfam" id="PF02801">
    <property type="entry name" value="Ketoacyl-synt_C"/>
    <property type="match status" value="1"/>
</dbReference>
<dbReference type="Pfam" id="PF08659">
    <property type="entry name" value="KR"/>
    <property type="match status" value="1"/>
</dbReference>
<dbReference type="Pfam" id="PF08242">
    <property type="entry name" value="Methyltransf_12"/>
    <property type="match status" value="1"/>
</dbReference>
<dbReference type="Pfam" id="PF21089">
    <property type="entry name" value="PKS_DH_N"/>
    <property type="match status" value="1"/>
</dbReference>
<dbReference type="Pfam" id="PF00550">
    <property type="entry name" value="PP-binding"/>
    <property type="match status" value="1"/>
</dbReference>
<dbReference type="SMART" id="SM00827">
    <property type="entry name" value="PKS_AT"/>
    <property type="match status" value="1"/>
</dbReference>
<dbReference type="SMART" id="SM00826">
    <property type="entry name" value="PKS_DH"/>
    <property type="match status" value="1"/>
</dbReference>
<dbReference type="SMART" id="SM00829">
    <property type="entry name" value="PKS_ER"/>
    <property type="match status" value="1"/>
</dbReference>
<dbReference type="SMART" id="SM00822">
    <property type="entry name" value="PKS_KR"/>
    <property type="match status" value="1"/>
</dbReference>
<dbReference type="SMART" id="SM00825">
    <property type="entry name" value="PKS_KS"/>
    <property type="match status" value="1"/>
</dbReference>
<dbReference type="SMART" id="SM00823">
    <property type="entry name" value="PKS_PP"/>
    <property type="match status" value="1"/>
</dbReference>
<dbReference type="SUPFAM" id="SSF47336">
    <property type="entry name" value="ACP-like"/>
    <property type="match status" value="1"/>
</dbReference>
<dbReference type="SUPFAM" id="SSF52151">
    <property type="entry name" value="FabD/lysophospholipase-like"/>
    <property type="match status" value="1"/>
</dbReference>
<dbReference type="SUPFAM" id="SSF50129">
    <property type="entry name" value="GroES-like"/>
    <property type="match status" value="1"/>
</dbReference>
<dbReference type="SUPFAM" id="SSF51735">
    <property type="entry name" value="NAD(P)-binding Rossmann-fold domains"/>
    <property type="match status" value="2"/>
</dbReference>
<dbReference type="SUPFAM" id="SSF55048">
    <property type="entry name" value="Probable ACP-binding domain of malonyl-CoA ACP transacylase"/>
    <property type="match status" value="1"/>
</dbReference>
<dbReference type="SUPFAM" id="SSF53335">
    <property type="entry name" value="S-adenosyl-L-methionine-dependent methyltransferases"/>
    <property type="match status" value="1"/>
</dbReference>
<dbReference type="SUPFAM" id="SSF53901">
    <property type="entry name" value="Thiolase-like"/>
    <property type="match status" value="1"/>
</dbReference>
<dbReference type="PROSITE" id="PS50075">
    <property type="entry name" value="CARRIER"/>
    <property type="match status" value="1"/>
</dbReference>
<dbReference type="PROSITE" id="PS52004">
    <property type="entry name" value="KS3_2"/>
    <property type="match status" value="1"/>
</dbReference>
<dbReference type="PROSITE" id="PS00012">
    <property type="entry name" value="PHOSPHOPANTETHEINE"/>
    <property type="match status" value="1"/>
</dbReference>
<dbReference type="PROSITE" id="PS52019">
    <property type="entry name" value="PKS_MFAS_DH"/>
    <property type="match status" value="1"/>
</dbReference>
<name>PKS2_LEPMJ</name>
<protein>
    <recommendedName>
        <fullName evidence="7">Highly reducing polyketide synthase PKS2</fullName>
        <shortName evidence="8">HR-PKS PKS2</shortName>
        <ecNumber evidence="8">2.3.1.-</ecNumber>
    </recommendedName>
    <alternativeName>
        <fullName evidence="7">Phomenoic acid biosynthesis cluster protein PKS2</fullName>
    </alternativeName>
</protein>
<accession>E5AE40</accession>
<keyword id="KW-0012">Acyltransferase</keyword>
<keyword id="KW-0489">Methyltransferase</keyword>
<keyword id="KW-0511">Multifunctional enzyme</keyword>
<keyword id="KW-0521">NADP</keyword>
<keyword id="KW-0560">Oxidoreductase</keyword>
<keyword id="KW-0596">Phosphopantetheine</keyword>
<keyword id="KW-0597">Phosphoprotein</keyword>
<keyword id="KW-1185">Reference proteome</keyword>
<keyword id="KW-0949">S-adenosyl-L-methionine</keyword>
<keyword id="KW-0808">Transferase</keyword>
<organism>
    <name type="scientific">Leptosphaeria maculans (strain JN3 / isolate v23.1.3 / race Av1-4-5-6-7-8)</name>
    <name type="common">Blackleg fungus</name>
    <name type="synonym">Phoma lingam</name>
    <dbReference type="NCBI Taxonomy" id="985895"/>
    <lineage>
        <taxon>Eukaryota</taxon>
        <taxon>Fungi</taxon>
        <taxon>Dikarya</taxon>
        <taxon>Ascomycota</taxon>
        <taxon>Pezizomycotina</taxon>
        <taxon>Dothideomycetes</taxon>
        <taxon>Pleosporomycetidae</taxon>
        <taxon>Pleosporales</taxon>
        <taxon>Pleosporineae</taxon>
        <taxon>Leptosphaeriaceae</taxon>
        <taxon>Plenodomus</taxon>
        <taxon>Plenodomus lingam/Leptosphaeria maculans species complex</taxon>
    </lineage>
</organism>
<proteinExistence type="evidence at transcript level"/>